<evidence type="ECO:0000255" key="1">
    <source>
        <dbReference type="HAMAP-Rule" id="MF_01367"/>
    </source>
</evidence>
<evidence type="ECO:0000305" key="2"/>
<keyword id="KW-1185">Reference proteome</keyword>
<keyword id="KW-0687">Ribonucleoprotein</keyword>
<keyword id="KW-0689">Ribosomal protein</keyword>
<keyword id="KW-0694">RNA-binding</keyword>
<keyword id="KW-0699">rRNA-binding</keyword>
<accession>Q6AP61</accession>
<name>RL14_DESPS</name>
<comment type="function">
    <text evidence="1">Binds to 23S rRNA. Forms part of two intersubunit bridges in the 70S ribosome.</text>
</comment>
<comment type="subunit">
    <text evidence="1">Part of the 50S ribosomal subunit. Forms a cluster with proteins L3 and L19. In the 70S ribosome, L14 and L19 interact and together make contacts with the 16S rRNA in bridges B5 and B8.</text>
</comment>
<comment type="similarity">
    <text evidence="1">Belongs to the universal ribosomal protein uL14 family.</text>
</comment>
<proteinExistence type="inferred from homology"/>
<gene>
    <name evidence="1" type="primary">rplN</name>
    <name type="ordered locus">DP1134</name>
</gene>
<protein>
    <recommendedName>
        <fullName evidence="1">Large ribosomal subunit protein uL14</fullName>
    </recommendedName>
    <alternativeName>
        <fullName evidence="2">50S ribosomal protein L14</fullName>
    </alternativeName>
</protein>
<dbReference type="EMBL" id="CR522870">
    <property type="protein sequence ID" value="CAG35863.1"/>
    <property type="molecule type" value="Genomic_DNA"/>
</dbReference>
<dbReference type="RefSeq" id="WP_011188377.1">
    <property type="nucleotide sequence ID" value="NC_006138.1"/>
</dbReference>
<dbReference type="SMR" id="Q6AP61"/>
<dbReference type="STRING" id="177439.DP1134"/>
<dbReference type="KEGG" id="dps:DP1134"/>
<dbReference type="eggNOG" id="COG0093">
    <property type="taxonomic scope" value="Bacteria"/>
</dbReference>
<dbReference type="HOGENOM" id="CLU_095071_2_1_7"/>
<dbReference type="OrthoDB" id="9806379at2"/>
<dbReference type="Proteomes" id="UP000000602">
    <property type="component" value="Chromosome"/>
</dbReference>
<dbReference type="GO" id="GO:0022625">
    <property type="term" value="C:cytosolic large ribosomal subunit"/>
    <property type="evidence" value="ECO:0007669"/>
    <property type="project" value="TreeGrafter"/>
</dbReference>
<dbReference type="GO" id="GO:0070180">
    <property type="term" value="F:large ribosomal subunit rRNA binding"/>
    <property type="evidence" value="ECO:0007669"/>
    <property type="project" value="TreeGrafter"/>
</dbReference>
<dbReference type="GO" id="GO:0003735">
    <property type="term" value="F:structural constituent of ribosome"/>
    <property type="evidence" value="ECO:0007669"/>
    <property type="project" value="InterPro"/>
</dbReference>
<dbReference type="GO" id="GO:0006412">
    <property type="term" value="P:translation"/>
    <property type="evidence" value="ECO:0007669"/>
    <property type="project" value="UniProtKB-UniRule"/>
</dbReference>
<dbReference type="CDD" id="cd00337">
    <property type="entry name" value="Ribosomal_uL14"/>
    <property type="match status" value="1"/>
</dbReference>
<dbReference type="FunFam" id="2.40.150.20:FF:000001">
    <property type="entry name" value="50S ribosomal protein L14"/>
    <property type="match status" value="1"/>
</dbReference>
<dbReference type="Gene3D" id="2.40.150.20">
    <property type="entry name" value="Ribosomal protein L14"/>
    <property type="match status" value="1"/>
</dbReference>
<dbReference type="HAMAP" id="MF_01367">
    <property type="entry name" value="Ribosomal_uL14"/>
    <property type="match status" value="1"/>
</dbReference>
<dbReference type="InterPro" id="IPR000218">
    <property type="entry name" value="Ribosomal_uL14"/>
</dbReference>
<dbReference type="InterPro" id="IPR005745">
    <property type="entry name" value="Ribosomal_uL14_bac-type"/>
</dbReference>
<dbReference type="InterPro" id="IPR036853">
    <property type="entry name" value="Ribosomal_uL14_sf"/>
</dbReference>
<dbReference type="NCBIfam" id="TIGR01067">
    <property type="entry name" value="rplN_bact"/>
    <property type="match status" value="1"/>
</dbReference>
<dbReference type="PANTHER" id="PTHR11761">
    <property type="entry name" value="50S/60S RIBOSOMAL PROTEIN L14/L23"/>
    <property type="match status" value="1"/>
</dbReference>
<dbReference type="PANTHER" id="PTHR11761:SF3">
    <property type="entry name" value="LARGE RIBOSOMAL SUBUNIT PROTEIN UL14M"/>
    <property type="match status" value="1"/>
</dbReference>
<dbReference type="Pfam" id="PF00238">
    <property type="entry name" value="Ribosomal_L14"/>
    <property type="match status" value="1"/>
</dbReference>
<dbReference type="SMART" id="SM01374">
    <property type="entry name" value="Ribosomal_L14"/>
    <property type="match status" value="1"/>
</dbReference>
<dbReference type="SUPFAM" id="SSF50193">
    <property type="entry name" value="Ribosomal protein L14"/>
    <property type="match status" value="1"/>
</dbReference>
<sequence>MIQTETVLNVADNSGAKKVLCIRVLGGSRKRYASIGDVIVVTVKEAIPHAKVKKGDVMKAVVVRTAKENRRPDDTWVKFDENAAVMLGASGEPVGTRIFGPVARELRNQGFMKIISLAPEVL</sequence>
<organism>
    <name type="scientific">Desulfotalea psychrophila (strain LSv54 / DSM 12343)</name>
    <dbReference type="NCBI Taxonomy" id="177439"/>
    <lineage>
        <taxon>Bacteria</taxon>
        <taxon>Pseudomonadati</taxon>
        <taxon>Thermodesulfobacteriota</taxon>
        <taxon>Desulfobulbia</taxon>
        <taxon>Desulfobulbales</taxon>
        <taxon>Desulfocapsaceae</taxon>
        <taxon>Desulfotalea</taxon>
    </lineage>
</organism>
<feature type="chain" id="PRO_0000266477" description="Large ribosomal subunit protein uL14">
    <location>
        <begin position="1"/>
        <end position="122"/>
    </location>
</feature>
<reference key="1">
    <citation type="journal article" date="2004" name="Environ. Microbiol.">
        <title>The genome of Desulfotalea psychrophila, a sulfate-reducing bacterium from permanently cold Arctic sediments.</title>
        <authorList>
            <person name="Rabus R."/>
            <person name="Ruepp A."/>
            <person name="Frickey T."/>
            <person name="Rattei T."/>
            <person name="Fartmann B."/>
            <person name="Stark M."/>
            <person name="Bauer M."/>
            <person name="Zibat A."/>
            <person name="Lombardot T."/>
            <person name="Becker I."/>
            <person name="Amann J."/>
            <person name="Gellner K."/>
            <person name="Teeling H."/>
            <person name="Leuschner W.D."/>
            <person name="Gloeckner F.-O."/>
            <person name="Lupas A.N."/>
            <person name="Amann R."/>
            <person name="Klenk H.-P."/>
        </authorList>
    </citation>
    <scope>NUCLEOTIDE SEQUENCE [LARGE SCALE GENOMIC DNA]</scope>
    <source>
        <strain>DSM 12343 / LSv54</strain>
    </source>
</reference>